<protein>
    <recommendedName>
        <fullName evidence="1">Structure-specific endonuclease subunit slx4</fullName>
    </recommendedName>
</protein>
<gene>
    <name type="primary">slx4</name>
    <name type="ORF">ATEG_09572</name>
</gene>
<comment type="function">
    <text evidence="1">Regulatory subunit of the slx1-slx4 structure-specific endonuclease that resolves DNA secondary structures generated during DNA repair and recombination. Has endonuclease activity towards branched DNA substrates, introducing single-strand cuts in duplex DNA close to junctions with ss-DNA.</text>
</comment>
<comment type="subunit">
    <text evidence="1">Forms a heterodimer with slx1.</text>
</comment>
<comment type="subcellular location">
    <subcellularLocation>
        <location evidence="1">Nucleus</location>
    </subcellularLocation>
</comment>
<comment type="PTM">
    <text evidence="1">Phosphorylated in response to DNA damage.</text>
</comment>
<comment type="similarity">
    <text evidence="1">Belongs to the SLX4 family.</text>
</comment>
<comment type="sequence caution" evidence="3">
    <conflict type="erroneous gene model prediction">
        <sequence resource="EMBL-CDS" id="EAU29763"/>
    </conflict>
</comment>
<feature type="chain" id="PRO_0000388018" description="Structure-specific endonuclease subunit slx4">
    <location>
        <begin position="1"/>
        <end position="773"/>
    </location>
</feature>
<feature type="region of interest" description="Disordered" evidence="2">
    <location>
        <begin position="1"/>
        <end position="191"/>
    </location>
</feature>
<feature type="region of interest" description="Disordered" evidence="2">
    <location>
        <begin position="248"/>
        <end position="331"/>
    </location>
</feature>
<feature type="region of interest" description="Disordered" evidence="2">
    <location>
        <begin position="436"/>
        <end position="495"/>
    </location>
</feature>
<feature type="region of interest" description="Disordered" evidence="2">
    <location>
        <begin position="542"/>
        <end position="623"/>
    </location>
</feature>
<feature type="region of interest" description="Disordered" evidence="2">
    <location>
        <begin position="653"/>
        <end position="691"/>
    </location>
</feature>
<feature type="compositionally biased region" description="Polar residues" evidence="2">
    <location>
        <begin position="1"/>
        <end position="14"/>
    </location>
</feature>
<feature type="compositionally biased region" description="Low complexity" evidence="2">
    <location>
        <begin position="36"/>
        <end position="50"/>
    </location>
</feature>
<feature type="compositionally biased region" description="Basic and acidic residues" evidence="2">
    <location>
        <begin position="61"/>
        <end position="72"/>
    </location>
</feature>
<feature type="compositionally biased region" description="Basic and acidic residues" evidence="2">
    <location>
        <begin position="84"/>
        <end position="99"/>
    </location>
</feature>
<feature type="compositionally biased region" description="Polar residues" evidence="2">
    <location>
        <begin position="165"/>
        <end position="175"/>
    </location>
</feature>
<feature type="compositionally biased region" description="Basic residues" evidence="2">
    <location>
        <begin position="317"/>
        <end position="328"/>
    </location>
</feature>
<feature type="compositionally biased region" description="Polar residues" evidence="2">
    <location>
        <begin position="436"/>
        <end position="449"/>
    </location>
</feature>
<feature type="compositionally biased region" description="Basic and acidic residues" evidence="2">
    <location>
        <begin position="476"/>
        <end position="491"/>
    </location>
</feature>
<feature type="compositionally biased region" description="Polar residues" evidence="2">
    <location>
        <begin position="542"/>
        <end position="558"/>
    </location>
</feature>
<feature type="compositionally biased region" description="Basic and acidic residues" evidence="2">
    <location>
        <begin position="572"/>
        <end position="581"/>
    </location>
</feature>
<feature type="compositionally biased region" description="Polar residues" evidence="2">
    <location>
        <begin position="611"/>
        <end position="623"/>
    </location>
</feature>
<feature type="compositionally biased region" description="Low complexity" evidence="2">
    <location>
        <begin position="660"/>
        <end position="673"/>
    </location>
</feature>
<organism>
    <name type="scientific">Aspergillus terreus (strain NIH 2624 / FGSC A1156)</name>
    <dbReference type="NCBI Taxonomy" id="341663"/>
    <lineage>
        <taxon>Eukaryota</taxon>
        <taxon>Fungi</taxon>
        <taxon>Dikarya</taxon>
        <taxon>Ascomycota</taxon>
        <taxon>Pezizomycotina</taxon>
        <taxon>Eurotiomycetes</taxon>
        <taxon>Eurotiomycetidae</taxon>
        <taxon>Eurotiales</taxon>
        <taxon>Aspergillaceae</taxon>
        <taxon>Aspergillus</taxon>
        <taxon>Aspergillus subgen. Circumdati</taxon>
    </lineage>
</organism>
<accession>Q0C9R2</accession>
<proteinExistence type="inferred from homology"/>
<reference key="1">
    <citation type="submission" date="2005-09" db="EMBL/GenBank/DDBJ databases">
        <title>Annotation of the Aspergillus terreus NIH2624 genome.</title>
        <authorList>
            <person name="Birren B.W."/>
            <person name="Lander E.S."/>
            <person name="Galagan J.E."/>
            <person name="Nusbaum C."/>
            <person name="Devon K."/>
            <person name="Henn M."/>
            <person name="Ma L.-J."/>
            <person name="Jaffe D.B."/>
            <person name="Butler J."/>
            <person name="Alvarez P."/>
            <person name="Gnerre S."/>
            <person name="Grabherr M."/>
            <person name="Kleber M."/>
            <person name="Mauceli E.W."/>
            <person name="Brockman W."/>
            <person name="Rounsley S."/>
            <person name="Young S.K."/>
            <person name="LaButti K."/>
            <person name="Pushparaj V."/>
            <person name="DeCaprio D."/>
            <person name="Crawford M."/>
            <person name="Koehrsen M."/>
            <person name="Engels R."/>
            <person name="Montgomery P."/>
            <person name="Pearson M."/>
            <person name="Howarth C."/>
            <person name="Larson L."/>
            <person name="Luoma S."/>
            <person name="White J."/>
            <person name="Alvarado L."/>
            <person name="Kodira C.D."/>
            <person name="Zeng Q."/>
            <person name="Oleary S."/>
            <person name="Yandava C."/>
            <person name="Denning D.W."/>
            <person name="Nierman W.C."/>
            <person name="Milne T."/>
            <person name="Madden K."/>
        </authorList>
    </citation>
    <scope>NUCLEOTIDE SEQUENCE [LARGE SCALE GENOMIC DNA]</scope>
    <source>
        <strain>NIH 2624 / FGSC A1156</strain>
    </source>
</reference>
<sequence length="773" mass="84830">MSAASNPIVLSSSPEHCAPRAAAPTTHDFNEAAAVPSRGSSPESILSPSSLCRLPTRSRYFQKESLSDEPRTENGPPRGPPSKTSERREKREKKVERSISEPAAGLDGVRPPLLPQKANAPKRASGSNKKRGKCSKSETSTNKTLTGRVAKSGSMGSQESDKTATDASQCGSLRQKSPKPSDDGGNNDLQLEAALKRRLDWTPTKDTSIELVDASQEGAKEGSSKGFGDLLAGYSFNNNLLFSKCTSNDTTAEESTEDSQNGDRASEAKRRTKQRTKKFTTLTARVTARYQSDDMHSRLQTENPDGFMESANGNMPKLKRKGTSRSKRQQPEVVILSPEEAVKSLNEQDLIFGTCSQLEREDSPTMIRDLQAAIHESEQNMASQPTNSLLQRAGGGSMSTSTVSRFRAPKSLWSVAARDLDGSLIDAEVVDLTESPSFKPSMANKQVTAGSIPENPPYEEKIRESDSISQPSKRIHNQDEAPKPEASEHTHLSMPNYNDFTDAVLSERVTEFGFKPLKNRRKMVELLEKCWETKYGPSLYINDTSDQQAGPASSTSRVASARLQVPEGQPSKTKESREATKPKTAAGSKRTTKSDANPCTAAGPTRERTKITASGTRLNKPSSITSYRDVEEIEDSEEEIIPSPNRLQNNFRISRSSKRTASLSVTDTSSSPSRMPLSAGLSGVDKRNPSDISDQITRAVRAQSSTRPGTRNCPTWHEKILMYDPIIIEDFTTWLNTEGLGLVREDREVNVGSVRQWCESRGICCCYRRLNRN</sequence>
<evidence type="ECO:0000255" key="1">
    <source>
        <dbReference type="HAMAP-Rule" id="MF_03110"/>
    </source>
</evidence>
<evidence type="ECO:0000256" key="2">
    <source>
        <dbReference type="SAM" id="MobiDB-lite"/>
    </source>
</evidence>
<evidence type="ECO:0000305" key="3"/>
<dbReference type="EMBL" id="CH476608">
    <property type="protein sequence ID" value="EAU29763.1"/>
    <property type="status" value="ALT_SEQ"/>
    <property type="molecule type" value="Genomic_DNA"/>
</dbReference>
<dbReference type="RefSeq" id="XP_001218194.1">
    <property type="nucleotide sequence ID" value="XM_001218193.1"/>
</dbReference>
<dbReference type="SMR" id="Q0C9R2"/>
<dbReference type="STRING" id="341663.Q0C9R2"/>
<dbReference type="EnsemblFungi" id="EAU29763">
    <property type="protein sequence ID" value="EAU29763"/>
    <property type="gene ID" value="ATEG_09572"/>
</dbReference>
<dbReference type="GeneID" id="4354381"/>
<dbReference type="eggNOG" id="ENOG502S832">
    <property type="taxonomic scope" value="Eukaryota"/>
</dbReference>
<dbReference type="OrthoDB" id="5349119at2759"/>
<dbReference type="Proteomes" id="UP000007963">
    <property type="component" value="Unassembled WGS sequence"/>
</dbReference>
<dbReference type="GO" id="GO:0033557">
    <property type="term" value="C:Slx1-Slx4 complex"/>
    <property type="evidence" value="ECO:0007669"/>
    <property type="project" value="UniProtKB-UniRule"/>
</dbReference>
<dbReference type="GO" id="GO:0017108">
    <property type="term" value="F:5'-flap endonuclease activity"/>
    <property type="evidence" value="ECO:0007669"/>
    <property type="project" value="InterPro"/>
</dbReference>
<dbReference type="GO" id="GO:0006310">
    <property type="term" value="P:DNA recombination"/>
    <property type="evidence" value="ECO:0007669"/>
    <property type="project" value="UniProtKB-UniRule"/>
</dbReference>
<dbReference type="GO" id="GO:0006281">
    <property type="term" value="P:DNA repair"/>
    <property type="evidence" value="ECO:0007669"/>
    <property type="project" value="UniProtKB-UniRule"/>
</dbReference>
<dbReference type="GO" id="GO:0006260">
    <property type="term" value="P:DNA replication"/>
    <property type="evidence" value="ECO:0007669"/>
    <property type="project" value="InterPro"/>
</dbReference>
<dbReference type="CDD" id="cd22999">
    <property type="entry name" value="SAP_SLX4"/>
    <property type="match status" value="1"/>
</dbReference>
<dbReference type="HAMAP" id="MF_03110">
    <property type="entry name" value="Endonuc_su_Slx4"/>
    <property type="match status" value="1"/>
</dbReference>
<dbReference type="InterPro" id="IPR027784">
    <property type="entry name" value="Slx4_ascomycetes"/>
</dbReference>
<dbReference type="InterPro" id="IPR018574">
    <property type="entry name" value="Structure-sp_endonuc_su_Slx4"/>
</dbReference>
<dbReference type="Pfam" id="PF09494">
    <property type="entry name" value="Slx4"/>
    <property type="match status" value="1"/>
</dbReference>
<name>SLX4_ASPTN</name>
<keyword id="KW-0227">DNA damage</keyword>
<keyword id="KW-0233">DNA recombination</keyword>
<keyword id="KW-0234">DNA repair</keyword>
<keyword id="KW-0539">Nucleus</keyword>
<keyword id="KW-0597">Phosphoprotein</keyword>
<keyword id="KW-1185">Reference proteome</keyword>